<proteinExistence type="inferred from homology"/>
<keyword id="KW-0378">Hydrolase</keyword>
<keyword id="KW-1185">Reference proteome</keyword>
<dbReference type="EC" id="3.1.1.31"/>
<dbReference type="EMBL" id="LT708304">
    <property type="protein sequence ID" value="SIU00083.1"/>
    <property type="molecule type" value="Genomic_DNA"/>
</dbReference>
<dbReference type="RefSeq" id="NP_855132.1">
    <property type="nucleotide sequence ID" value="NC_002945.3"/>
</dbReference>
<dbReference type="RefSeq" id="WP_003407433.1">
    <property type="nucleotide sequence ID" value="NC_002945.4"/>
</dbReference>
<dbReference type="SMR" id="P63339"/>
<dbReference type="KEGG" id="mbo:BQ2027_MB1480C"/>
<dbReference type="PATRIC" id="fig|233413.5.peg.1619"/>
<dbReference type="UniPathway" id="UPA00115">
    <property type="reaction ID" value="UER00409"/>
</dbReference>
<dbReference type="Proteomes" id="UP000001419">
    <property type="component" value="Chromosome"/>
</dbReference>
<dbReference type="GO" id="GO:0017057">
    <property type="term" value="F:6-phosphogluconolactonase activity"/>
    <property type="evidence" value="ECO:0007669"/>
    <property type="project" value="UniProtKB-EC"/>
</dbReference>
<dbReference type="GO" id="GO:0005975">
    <property type="term" value="P:carbohydrate metabolic process"/>
    <property type="evidence" value="ECO:0007669"/>
    <property type="project" value="InterPro"/>
</dbReference>
<dbReference type="GO" id="GO:0006098">
    <property type="term" value="P:pentose-phosphate shunt"/>
    <property type="evidence" value="ECO:0007669"/>
    <property type="project" value="UniProtKB-UniPathway"/>
</dbReference>
<dbReference type="CDD" id="cd01400">
    <property type="entry name" value="6PGL"/>
    <property type="match status" value="1"/>
</dbReference>
<dbReference type="FunFam" id="3.40.50.1360:FF:000005">
    <property type="entry name" value="6-phosphogluconolactonase"/>
    <property type="match status" value="1"/>
</dbReference>
<dbReference type="Gene3D" id="3.40.50.1360">
    <property type="match status" value="1"/>
</dbReference>
<dbReference type="InterPro" id="IPR005900">
    <property type="entry name" value="6-phosphogluconolactonase_DevB"/>
</dbReference>
<dbReference type="InterPro" id="IPR006148">
    <property type="entry name" value="Glc/Gal-6P_isomerase"/>
</dbReference>
<dbReference type="InterPro" id="IPR037171">
    <property type="entry name" value="NagB/RpiA_transferase-like"/>
</dbReference>
<dbReference type="InterPro" id="IPR039104">
    <property type="entry name" value="PGLS"/>
</dbReference>
<dbReference type="NCBIfam" id="TIGR01198">
    <property type="entry name" value="pgl"/>
    <property type="match status" value="1"/>
</dbReference>
<dbReference type="PANTHER" id="PTHR11054">
    <property type="entry name" value="6-PHOSPHOGLUCONOLACTONASE"/>
    <property type="match status" value="1"/>
</dbReference>
<dbReference type="PANTHER" id="PTHR11054:SF0">
    <property type="entry name" value="6-PHOSPHOGLUCONOLACTONASE"/>
    <property type="match status" value="1"/>
</dbReference>
<dbReference type="Pfam" id="PF01182">
    <property type="entry name" value="Glucosamine_iso"/>
    <property type="match status" value="1"/>
</dbReference>
<dbReference type="SUPFAM" id="SSF100950">
    <property type="entry name" value="NagB/RpiA/CoA transferase-like"/>
    <property type="match status" value="1"/>
</dbReference>
<accession>P63339</accession>
<accession>A0A1R3Y0H3</accession>
<accession>O06814</accession>
<accession>X2BI57</accession>
<evidence type="ECO:0000305" key="1"/>
<gene>
    <name type="primary">pgl</name>
    <name type="synonym">devB</name>
    <name type="ordered locus">BQ2027_MB1480C</name>
</gene>
<name>6PGL_MYCBO</name>
<organism>
    <name type="scientific">Mycobacterium bovis (strain ATCC BAA-935 / AF2122/97)</name>
    <dbReference type="NCBI Taxonomy" id="233413"/>
    <lineage>
        <taxon>Bacteria</taxon>
        <taxon>Bacillati</taxon>
        <taxon>Actinomycetota</taxon>
        <taxon>Actinomycetes</taxon>
        <taxon>Mycobacteriales</taxon>
        <taxon>Mycobacteriaceae</taxon>
        <taxon>Mycobacterium</taxon>
        <taxon>Mycobacterium tuberculosis complex</taxon>
    </lineage>
</organism>
<sequence length="247" mass="25804">MSSSIEIFPDSDILVAAAGKRLVGAIGAAVAARGQALIVLTGGGNGIALLRYLSAQAQQIEWSKVHLFWGDERYVPEDDDERNLKQARRALLNHVDIPSNQVHPMAASDGDFGGDLDAAALAYEQVLAASAAPGDPAPNFDVHLLGMGPEGHINSLFPHSPAVLESTRMVVAVDDSPKPPPRRITLTLPAIQRSREVWLLVSGPGKADAVAAAIGGADPVSVPAAGAVGRQNTLWLLDRDAAAKLPS</sequence>
<reference key="1">
    <citation type="journal article" date="2003" name="Proc. Natl. Acad. Sci. U.S.A.">
        <title>The complete genome sequence of Mycobacterium bovis.</title>
        <authorList>
            <person name="Garnier T."/>
            <person name="Eiglmeier K."/>
            <person name="Camus J.-C."/>
            <person name="Medina N."/>
            <person name="Mansoor H."/>
            <person name="Pryor M."/>
            <person name="Duthoy S."/>
            <person name="Grondin S."/>
            <person name="Lacroix C."/>
            <person name="Monsempe C."/>
            <person name="Simon S."/>
            <person name="Harris B."/>
            <person name="Atkin R."/>
            <person name="Doggett J."/>
            <person name="Mayes R."/>
            <person name="Keating L."/>
            <person name="Wheeler P.R."/>
            <person name="Parkhill J."/>
            <person name="Barrell B.G."/>
            <person name="Cole S.T."/>
            <person name="Gordon S.V."/>
            <person name="Hewinson R.G."/>
        </authorList>
    </citation>
    <scope>NUCLEOTIDE SEQUENCE [LARGE SCALE GENOMIC DNA]</scope>
    <source>
        <strain>ATCC BAA-935 / AF2122/97</strain>
    </source>
</reference>
<reference key="2">
    <citation type="journal article" date="2017" name="Genome Announc.">
        <title>Updated reference genome sequence and annotation of Mycobacterium bovis AF2122/97.</title>
        <authorList>
            <person name="Malone K.M."/>
            <person name="Farrell D."/>
            <person name="Stuber T.P."/>
            <person name="Schubert O.T."/>
            <person name="Aebersold R."/>
            <person name="Robbe-Austerman S."/>
            <person name="Gordon S.V."/>
        </authorList>
    </citation>
    <scope>NUCLEOTIDE SEQUENCE [LARGE SCALE GENOMIC DNA]</scope>
    <scope>GENOME REANNOTATION</scope>
    <source>
        <strain>ATCC BAA-935 / AF2122/97</strain>
    </source>
</reference>
<feature type="chain" id="PRO_0000090099" description="6-phosphogluconolactonase">
    <location>
        <begin position="1"/>
        <end position="247"/>
    </location>
</feature>
<comment type="function">
    <text>Hydrolysis of 6-phosphogluconolactone to 6-phosphogluconate.</text>
</comment>
<comment type="catalytic activity">
    <reaction>
        <text>6-phospho-D-glucono-1,5-lactone + H2O = 6-phospho-D-gluconate + H(+)</text>
        <dbReference type="Rhea" id="RHEA:12556"/>
        <dbReference type="ChEBI" id="CHEBI:15377"/>
        <dbReference type="ChEBI" id="CHEBI:15378"/>
        <dbReference type="ChEBI" id="CHEBI:57955"/>
        <dbReference type="ChEBI" id="CHEBI:58759"/>
        <dbReference type="EC" id="3.1.1.31"/>
    </reaction>
</comment>
<comment type="pathway">
    <text>Carbohydrate degradation; pentose phosphate pathway; D-ribulose 5-phosphate from D-glucose 6-phosphate (oxidative stage): step 2/3.</text>
</comment>
<comment type="similarity">
    <text evidence="1">Belongs to the glucosamine/galactosamine-6-phosphate isomerase family. 6-phosphogluconolactonase subfamily.</text>
</comment>
<protein>
    <recommendedName>
        <fullName>6-phosphogluconolactonase</fullName>
        <shortName>6PGL</shortName>
        <ecNumber>3.1.1.31</ecNumber>
    </recommendedName>
</protein>